<name>DUT_AERPE</name>
<accession>Q9YG32</accession>
<protein>
    <recommendedName>
        <fullName evidence="1">Probable deoxyuridine 5'-triphosphate nucleotidohydrolase</fullName>
        <shortName evidence="1">dUTPase</shortName>
        <ecNumber evidence="1">3.6.1.23</ecNumber>
    </recommendedName>
    <alternativeName>
        <fullName evidence="1">dUTP pyrophosphatase</fullName>
    </alternativeName>
</protein>
<sequence>MFLSGRDLVLLGVVKGHSNGAIQPAGVDLSVGEIESLADAGFLGEEDKIMPKGDRIQCEYGVCELEPGAYRLRFNEVVSIPPGHVGFCFPRSSLLRMGCYLGCAVWDPGYTGRGQAMLLVANPHGLRLEMGSRIAQLVVARVEGPLTSLYKGDYQGEGL</sequence>
<dbReference type="EC" id="3.6.1.23" evidence="1"/>
<dbReference type="EMBL" id="BA000002">
    <property type="protein sequence ID" value="BAA78978.2"/>
    <property type="molecule type" value="Genomic_DNA"/>
</dbReference>
<dbReference type="PIR" id="H72759">
    <property type="entry name" value="H72759"/>
</dbReference>
<dbReference type="RefSeq" id="WP_010865464.1">
    <property type="nucleotide sequence ID" value="NC_000854.2"/>
</dbReference>
<dbReference type="SMR" id="Q9YG32"/>
<dbReference type="STRING" id="272557.APE_0069.1"/>
<dbReference type="EnsemblBacteria" id="BAA78978">
    <property type="protein sequence ID" value="BAA78978"/>
    <property type="gene ID" value="APE_0069.1"/>
</dbReference>
<dbReference type="GeneID" id="1445620"/>
<dbReference type="KEGG" id="ape:APE_0069.1"/>
<dbReference type="eggNOG" id="arCOG04048">
    <property type="taxonomic scope" value="Archaea"/>
</dbReference>
<dbReference type="UniPathway" id="UPA00610">
    <property type="reaction ID" value="UER00666"/>
</dbReference>
<dbReference type="Proteomes" id="UP000002518">
    <property type="component" value="Chromosome"/>
</dbReference>
<dbReference type="GO" id="GO:0008829">
    <property type="term" value="F:dCTP deaminase activity"/>
    <property type="evidence" value="ECO:0007669"/>
    <property type="project" value="InterPro"/>
</dbReference>
<dbReference type="GO" id="GO:0004170">
    <property type="term" value="F:dUTP diphosphatase activity"/>
    <property type="evidence" value="ECO:0007669"/>
    <property type="project" value="UniProtKB-UniRule"/>
</dbReference>
<dbReference type="GO" id="GO:0006226">
    <property type="term" value="P:dUMP biosynthetic process"/>
    <property type="evidence" value="ECO:0007669"/>
    <property type="project" value="UniProtKB-UniRule"/>
</dbReference>
<dbReference type="GO" id="GO:0006229">
    <property type="term" value="P:dUTP biosynthetic process"/>
    <property type="evidence" value="ECO:0007669"/>
    <property type="project" value="InterPro"/>
</dbReference>
<dbReference type="CDD" id="cd07557">
    <property type="entry name" value="trimeric_dUTPase"/>
    <property type="match status" value="1"/>
</dbReference>
<dbReference type="Gene3D" id="2.70.40.10">
    <property type="match status" value="1"/>
</dbReference>
<dbReference type="HAMAP" id="MF_00635">
    <property type="entry name" value="dUTPase_arch"/>
    <property type="match status" value="1"/>
</dbReference>
<dbReference type="InterPro" id="IPR011962">
    <property type="entry name" value="dCTP_deaminase"/>
</dbReference>
<dbReference type="InterPro" id="IPR036157">
    <property type="entry name" value="dUTPase-like_sf"/>
</dbReference>
<dbReference type="InterPro" id="IPR023537">
    <property type="entry name" value="dUTPase_archaeal"/>
</dbReference>
<dbReference type="InterPro" id="IPR033704">
    <property type="entry name" value="dUTPase_trimeric"/>
</dbReference>
<dbReference type="NCBIfam" id="NF002598">
    <property type="entry name" value="PRK02253.1"/>
    <property type="match status" value="1"/>
</dbReference>
<dbReference type="PANTHER" id="PTHR42680">
    <property type="entry name" value="DCTP DEAMINASE"/>
    <property type="match status" value="1"/>
</dbReference>
<dbReference type="PANTHER" id="PTHR42680:SF1">
    <property type="entry name" value="DEOXYURIDINE 5'-TRIPHOSPHATE NUCLEOTIDOHYDROLASE"/>
    <property type="match status" value="1"/>
</dbReference>
<dbReference type="Pfam" id="PF22769">
    <property type="entry name" value="DCD"/>
    <property type="match status" value="1"/>
</dbReference>
<dbReference type="SUPFAM" id="SSF51283">
    <property type="entry name" value="dUTPase-like"/>
    <property type="match status" value="1"/>
</dbReference>
<gene>
    <name evidence="1" type="primary">dut</name>
    <name type="ordered locus">APE_0069.1</name>
</gene>
<reference key="1">
    <citation type="journal article" date="1999" name="DNA Res.">
        <title>Complete genome sequence of an aerobic hyper-thermophilic crenarchaeon, Aeropyrum pernix K1.</title>
        <authorList>
            <person name="Kawarabayasi Y."/>
            <person name="Hino Y."/>
            <person name="Horikawa H."/>
            <person name="Yamazaki S."/>
            <person name="Haikawa Y."/>
            <person name="Jin-no K."/>
            <person name="Takahashi M."/>
            <person name="Sekine M."/>
            <person name="Baba S."/>
            <person name="Ankai A."/>
            <person name="Kosugi H."/>
            <person name="Hosoyama A."/>
            <person name="Fukui S."/>
            <person name="Nagai Y."/>
            <person name="Nishijima K."/>
            <person name="Nakazawa H."/>
            <person name="Takamiya M."/>
            <person name="Masuda S."/>
            <person name="Funahashi T."/>
            <person name="Tanaka T."/>
            <person name="Kudoh Y."/>
            <person name="Yamazaki J."/>
            <person name="Kushida N."/>
            <person name="Oguchi A."/>
            <person name="Aoki K."/>
            <person name="Kubota K."/>
            <person name="Nakamura Y."/>
            <person name="Nomura N."/>
            <person name="Sako Y."/>
            <person name="Kikuchi H."/>
        </authorList>
    </citation>
    <scope>NUCLEOTIDE SEQUENCE [LARGE SCALE GENOMIC DNA]</scope>
    <source>
        <strain>ATCC 700893 / DSM 11879 / JCM 9820 / NBRC 100138 / K1</strain>
    </source>
</reference>
<comment type="function">
    <text evidence="1">This enzyme is involved in nucleotide metabolism: it produces dUMP, the immediate precursor of thymidine nucleotides and it decreases the intracellular concentration of dUTP so that uracil cannot be incorporated into DNA.</text>
</comment>
<comment type="catalytic activity">
    <reaction evidence="1">
        <text>dUTP + H2O = dUMP + diphosphate + H(+)</text>
        <dbReference type="Rhea" id="RHEA:10248"/>
        <dbReference type="ChEBI" id="CHEBI:15377"/>
        <dbReference type="ChEBI" id="CHEBI:15378"/>
        <dbReference type="ChEBI" id="CHEBI:33019"/>
        <dbReference type="ChEBI" id="CHEBI:61555"/>
        <dbReference type="ChEBI" id="CHEBI:246422"/>
        <dbReference type="EC" id="3.6.1.23"/>
    </reaction>
</comment>
<comment type="pathway">
    <text evidence="1">Pyrimidine metabolism; dUMP biosynthesis; dUMP from dCTP (dUTP route): step 2/2.</text>
</comment>
<comment type="similarity">
    <text evidence="1">Belongs to the dCTP deaminase family. Archaeal dUTPase subfamily.</text>
</comment>
<evidence type="ECO:0000255" key="1">
    <source>
        <dbReference type="HAMAP-Rule" id="MF_00635"/>
    </source>
</evidence>
<feature type="chain" id="PRO_0000153634" description="Probable deoxyuridine 5'-triphosphate nucleotidohydrolase">
    <location>
        <begin position="1"/>
        <end position="159"/>
    </location>
</feature>
<proteinExistence type="inferred from homology"/>
<keyword id="KW-0378">Hydrolase</keyword>
<keyword id="KW-0546">Nucleotide metabolism</keyword>
<keyword id="KW-1185">Reference proteome</keyword>
<organism>
    <name type="scientific">Aeropyrum pernix (strain ATCC 700893 / DSM 11879 / JCM 9820 / NBRC 100138 / K1)</name>
    <dbReference type="NCBI Taxonomy" id="272557"/>
    <lineage>
        <taxon>Archaea</taxon>
        <taxon>Thermoproteota</taxon>
        <taxon>Thermoprotei</taxon>
        <taxon>Desulfurococcales</taxon>
        <taxon>Desulfurococcaceae</taxon>
        <taxon>Aeropyrum</taxon>
    </lineage>
</organism>